<protein>
    <recommendedName>
        <fullName evidence="1">Cell division inhibitor SulA</fullName>
    </recommendedName>
</protein>
<accession>P08848</accession>
<keyword id="KW-0131">Cell cycle</keyword>
<keyword id="KW-0132">Cell division</keyword>
<keyword id="KW-0227">DNA damage</keyword>
<keyword id="KW-0717">Septation</keyword>
<keyword id="KW-0742">SOS response</keyword>
<feature type="chain" id="PRO_0000072307" description="Cell division inhibitor SulA">
    <location>
        <begin position="1"/>
        <end position="169"/>
    </location>
</feature>
<feature type="region of interest" description="Disordered" evidence="2">
    <location>
        <begin position="1"/>
        <end position="20"/>
    </location>
</feature>
<feature type="region of interest" description="FtsZ binding" evidence="1">
    <location>
        <begin position="106"/>
        <end position="112"/>
    </location>
</feature>
<feature type="region of interest" description="Lon protease binding" evidence="1">
    <location>
        <begin position="162"/>
        <end position="169"/>
    </location>
</feature>
<feature type="compositionally biased region" description="Polar residues" evidence="2">
    <location>
        <begin position="1"/>
        <end position="16"/>
    </location>
</feature>
<feature type="site" description="Essential for degradation by Lon protease" evidence="1">
    <location>
        <position position="169"/>
    </location>
</feature>
<name>SULA_KLEAE</name>
<dbReference type="EMBL" id="M16467">
    <property type="protein sequence ID" value="AAA24810.1"/>
    <property type="molecule type" value="Genomic_DNA"/>
</dbReference>
<dbReference type="PIR" id="C29016">
    <property type="entry name" value="C29016"/>
</dbReference>
<dbReference type="SMR" id="P08848"/>
<dbReference type="STRING" id="548.EAG7_02415"/>
<dbReference type="GO" id="GO:0000917">
    <property type="term" value="P:division septum assembly"/>
    <property type="evidence" value="ECO:0007669"/>
    <property type="project" value="UniProtKB-KW"/>
</dbReference>
<dbReference type="GO" id="GO:0006281">
    <property type="term" value="P:DNA repair"/>
    <property type="evidence" value="ECO:0007669"/>
    <property type="project" value="TreeGrafter"/>
</dbReference>
<dbReference type="GO" id="GO:0051782">
    <property type="term" value="P:negative regulation of cell division"/>
    <property type="evidence" value="ECO:0007669"/>
    <property type="project" value="UniProtKB-UniRule"/>
</dbReference>
<dbReference type="GO" id="GO:0009432">
    <property type="term" value="P:SOS response"/>
    <property type="evidence" value="ECO:0007669"/>
    <property type="project" value="UniProtKB-UniRule"/>
</dbReference>
<dbReference type="FunFam" id="3.40.50.300:FF:000417">
    <property type="entry name" value="Cell division inhibitor SulA"/>
    <property type="match status" value="1"/>
</dbReference>
<dbReference type="Gene3D" id="3.40.50.300">
    <property type="entry name" value="P-loop containing nucleotide triphosphate hydrolases"/>
    <property type="match status" value="1"/>
</dbReference>
<dbReference type="HAMAP" id="MF_01179">
    <property type="entry name" value="SulA"/>
    <property type="match status" value="1"/>
</dbReference>
<dbReference type="InterPro" id="IPR004596">
    <property type="entry name" value="Cell_div_suppressor_SulA"/>
</dbReference>
<dbReference type="InterPro" id="IPR027417">
    <property type="entry name" value="P-loop_NTPase"/>
</dbReference>
<dbReference type="InterPro" id="IPR050356">
    <property type="entry name" value="SulA_CellDiv_inhibitor"/>
</dbReference>
<dbReference type="InterPro" id="IPR047696">
    <property type="entry name" value="SulA_enterobact"/>
</dbReference>
<dbReference type="NCBIfam" id="NF007892">
    <property type="entry name" value="PRK10595.1"/>
    <property type="match status" value="1"/>
</dbReference>
<dbReference type="NCBIfam" id="TIGR00623">
    <property type="entry name" value="SOS_SulA_coli"/>
    <property type="match status" value="1"/>
</dbReference>
<dbReference type="PANTHER" id="PTHR35369">
    <property type="entry name" value="BLR3025 PROTEIN-RELATED"/>
    <property type="match status" value="1"/>
</dbReference>
<dbReference type="PANTHER" id="PTHR35369:SF4">
    <property type="entry name" value="CELL DIVISION INHIBITOR SULA"/>
    <property type="match status" value="1"/>
</dbReference>
<dbReference type="Pfam" id="PF03846">
    <property type="entry name" value="SulA"/>
    <property type="match status" value="1"/>
</dbReference>
<dbReference type="PIRSF" id="PIRSF003093">
    <property type="entry name" value="SulA"/>
    <property type="match status" value="1"/>
</dbReference>
<dbReference type="SUPFAM" id="SSF52540">
    <property type="entry name" value="P-loop containing nucleoside triphosphate hydrolases"/>
    <property type="match status" value="1"/>
</dbReference>
<comment type="function">
    <text evidence="1">Component of the SOS system and an inhibitor of cell division. Accumulation of SulA causes rapid cessation of cell division and the appearance of long, non-septate filaments. In the presence of GTP, binds a polymerization-competent form of FtsZ in a 1:1 ratio, thus inhibiting FtsZ polymerization and therefore preventing it from participating in the assembly of the Z ring. This mechanism prevents the premature segregation of damaged DNA to daughter cells during cell division.</text>
</comment>
<comment type="subunit">
    <text evidence="1">Interacts with FtsZ.</text>
</comment>
<comment type="induction">
    <text evidence="1">By DNA damage, as part of the SOS response.</text>
</comment>
<comment type="PTM">
    <text evidence="1">Is rapidly cleaved and degraded by the Lon protease once DNA damage is repaired.</text>
</comment>
<comment type="similarity">
    <text evidence="1">Belongs to the SulA family.</text>
</comment>
<gene>
    <name evidence="1" type="primary">sulA</name>
</gene>
<organism>
    <name type="scientific">Klebsiella aerogenes</name>
    <name type="common">Enterobacter aerogenes</name>
    <dbReference type="NCBI Taxonomy" id="548"/>
    <lineage>
        <taxon>Bacteria</taxon>
        <taxon>Pseudomonadati</taxon>
        <taxon>Pseudomonadota</taxon>
        <taxon>Gammaproteobacteria</taxon>
        <taxon>Enterobacterales</taxon>
        <taxon>Enterobacteriaceae</taxon>
        <taxon>Klebsiella/Raoultella group</taxon>
        <taxon>Klebsiella</taxon>
    </lineage>
</organism>
<evidence type="ECO:0000255" key="1">
    <source>
        <dbReference type="HAMAP-Rule" id="MF_01179"/>
    </source>
</evidence>
<evidence type="ECO:0000256" key="2">
    <source>
        <dbReference type="SAM" id="MobiDB-lite"/>
    </source>
</evidence>
<sequence length="169" mass="19180">MFTSAHANRSPLTSASVRRPSHSVVEHSATGLISEIVYREDQPMMTQLLLLPLLQQLGQQSRWQLWLTPQQKLSKEWVQSSGLPLSKVMQINQMSPCNTLESMIRALRTGNYNVVIGWLTDELTEQEHERLALAAEEGHPMGFIMRPVRNTSQPGRQLSGLKIHSNLYH</sequence>
<reference key="1">
    <citation type="journal article" date="1987" name="Gene">
        <title>Evolution of the enterobacterial sulA gene: a component of the SOS system encoding an inhibitor of cell division.</title>
        <authorList>
            <person name="Freudl R."/>
            <person name="Braun G."/>
            <person name="Honore N."/>
            <person name="Cole S.T."/>
        </authorList>
    </citation>
    <scope>NUCLEOTIDE SEQUENCE [GENOMIC DNA]</scope>
</reference>
<proteinExistence type="inferred from homology"/>